<organism>
    <name type="scientific">Sulfurihydrogenibium sp. (strain YO3AOP1)</name>
    <dbReference type="NCBI Taxonomy" id="436114"/>
    <lineage>
        <taxon>Bacteria</taxon>
        <taxon>Pseudomonadati</taxon>
        <taxon>Aquificota</taxon>
        <taxon>Aquificia</taxon>
        <taxon>Aquificales</taxon>
        <taxon>Hydrogenothermaceae</taxon>
        <taxon>Sulfurihydrogenibium</taxon>
    </lineage>
</organism>
<name>PFKA_SULSY</name>
<proteinExistence type="inferred from homology"/>
<evidence type="ECO:0000255" key="1">
    <source>
        <dbReference type="HAMAP-Rule" id="MF_00339"/>
    </source>
</evidence>
<gene>
    <name evidence="1" type="primary">pfkA</name>
    <name type="ordered locus">SYO3AOP1_0397</name>
</gene>
<keyword id="KW-0021">Allosteric enzyme</keyword>
<keyword id="KW-0067">ATP-binding</keyword>
<keyword id="KW-0963">Cytoplasm</keyword>
<keyword id="KW-0324">Glycolysis</keyword>
<keyword id="KW-0418">Kinase</keyword>
<keyword id="KW-0460">Magnesium</keyword>
<keyword id="KW-0479">Metal-binding</keyword>
<keyword id="KW-0547">Nucleotide-binding</keyword>
<keyword id="KW-0808">Transferase</keyword>
<feature type="chain" id="PRO_1000133289" description="ATP-dependent 6-phosphofructokinase">
    <location>
        <begin position="1"/>
        <end position="324"/>
    </location>
</feature>
<feature type="active site" description="Proton acceptor" evidence="1">
    <location>
        <position position="128"/>
    </location>
</feature>
<feature type="binding site" evidence="1">
    <location>
        <position position="11"/>
    </location>
    <ligand>
        <name>ATP</name>
        <dbReference type="ChEBI" id="CHEBI:30616"/>
    </ligand>
</feature>
<feature type="binding site" evidence="1">
    <location>
        <begin position="21"/>
        <end position="25"/>
    </location>
    <ligand>
        <name>ADP</name>
        <dbReference type="ChEBI" id="CHEBI:456216"/>
        <note>allosteric activator; ligand shared between dimeric partners</note>
    </ligand>
</feature>
<feature type="binding site" evidence="1">
    <location>
        <begin position="72"/>
        <end position="73"/>
    </location>
    <ligand>
        <name>ATP</name>
        <dbReference type="ChEBI" id="CHEBI:30616"/>
    </ligand>
</feature>
<feature type="binding site" evidence="1">
    <location>
        <begin position="102"/>
        <end position="105"/>
    </location>
    <ligand>
        <name>ATP</name>
        <dbReference type="ChEBI" id="CHEBI:30616"/>
    </ligand>
</feature>
<feature type="binding site" evidence="1">
    <location>
        <position position="103"/>
    </location>
    <ligand>
        <name>Mg(2+)</name>
        <dbReference type="ChEBI" id="CHEBI:18420"/>
        <note>catalytic</note>
    </ligand>
</feature>
<feature type="binding site" description="in other chain" evidence="1">
    <location>
        <begin position="126"/>
        <end position="128"/>
    </location>
    <ligand>
        <name>substrate</name>
        <note>ligand shared between dimeric partners</note>
    </ligand>
</feature>
<feature type="binding site" description="in other chain" evidence="1">
    <location>
        <position position="155"/>
    </location>
    <ligand>
        <name>ADP</name>
        <dbReference type="ChEBI" id="CHEBI:456216"/>
        <note>allosteric activator; ligand shared between dimeric partners</note>
    </ligand>
</feature>
<feature type="binding site" evidence="1">
    <location>
        <position position="163"/>
    </location>
    <ligand>
        <name>substrate</name>
        <note>ligand shared between dimeric partners</note>
    </ligand>
</feature>
<feature type="binding site" description="in other chain" evidence="1">
    <location>
        <begin position="170"/>
        <end position="172"/>
    </location>
    <ligand>
        <name>substrate</name>
        <note>ligand shared between dimeric partners</note>
    </ligand>
</feature>
<feature type="binding site" description="in other chain" evidence="1">
    <location>
        <begin position="186"/>
        <end position="188"/>
    </location>
    <ligand>
        <name>ADP</name>
        <dbReference type="ChEBI" id="CHEBI:456216"/>
        <note>allosteric activator; ligand shared between dimeric partners</note>
    </ligand>
</feature>
<feature type="binding site" description="in other chain" evidence="1">
    <location>
        <begin position="214"/>
        <end position="216"/>
    </location>
    <ligand>
        <name>ADP</name>
        <dbReference type="ChEBI" id="CHEBI:456216"/>
        <note>allosteric activator; ligand shared between dimeric partners</note>
    </ligand>
</feature>
<feature type="binding site" description="in other chain" evidence="1">
    <location>
        <position position="223"/>
    </location>
    <ligand>
        <name>substrate</name>
        <note>ligand shared between dimeric partners</note>
    </ligand>
</feature>
<feature type="binding site" evidence="1">
    <location>
        <position position="248"/>
    </location>
    <ligand>
        <name>substrate</name>
        <note>ligand shared between dimeric partners</note>
    </ligand>
</feature>
<feature type="binding site" description="in other chain" evidence="1">
    <location>
        <begin position="254"/>
        <end position="257"/>
    </location>
    <ligand>
        <name>substrate</name>
        <note>ligand shared between dimeric partners</note>
    </ligand>
</feature>
<protein>
    <recommendedName>
        <fullName evidence="1">ATP-dependent 6-phosphofructokinase</fullName>
        <shortName evidence="1">ATP-PFK</shortName>
        <shortName evidence="1">Phosphofructokinase</shortName>
        <ecNumber evidence="1">2.7.1.11</ecNumber>
    </recommendedName>
    <alternativeName>
        <fullName evidence="1">Phosphohexokinase</fullName>
    </alternativeName>
</protein>
<reference key="1">
    <citation type="journal article" date="2009" name="J. Bacteriol.">
        <title>Complete and draft genome sequences of six members of the Aquificales.</title>
        <authorList>
            <person name="Reysenbach A.-L."/>
            <person name="Hamamura N."/>
            <person name="Podar M."/>
            <person name="Griffiths E."/>
            <person name="Ferreira S."/>
            <person name="Hochstein R."/>
            <person name="Heidelberg J."/>
            <person name="Johnson J."/>
            <person name="Mead D."/>
            <person name="Pohorille A."/>
            <person name="Sarmiento M."/>
            <person name="Schweighofer K."/>
            <person name="Seshadri R."/>
            <person name="Voytek M.A."/>
        </authorList>
    </citation>
    <scope>NUCLEOTIDE SEQUENCE [LARGE SCALE GENOMIC DNA]</scope>
    <source>
        <strain>YO3AOP1</strain>
    </source>
</reference>
<comment type="function">
    <text evidence="1">Catalyzes the phosphorylation of D-fructose 6-phosphate to fructose 1,6-bisphosphate by ATP, the first committing step of glycolysis.</text>
</comment>
<comment type="catalytic activity">
    <reaction evidence="1">
        <text>beta-D-fructose 6-phosphate + ATP = beta-D-fructose 1,6-bisphosphate + ADP + H(+)</text>
        <dbReference type="Rhea" id="RHEA:16109"/>
        <dbReference type="ChEBI" id="CHEBI:15378"/>
        <dbReference type="ChEBI" id="CHEBI:30616"/>
        <dbReference type="ChEBI" id="CHEBI:32966"/>
        <dbReference type="ChEBI" id="CHEBI:57634"/>
        <dbReference type="ChEBI" id="CHEBI:456216"/>
        <dbReference type="EC" id="2.7.1.11"/>
    </reaction>
</comment>
<comment type="cofactor">
    <cofactor evidence="1">
        <name>Mg(2+)</name>
        <dbReference type="ChEBI" id="CHEBI:18420"/>
    </cofactor>
</comment>
<comment type="activity regulation">
    <text evidence="1">Allosterically activated by ADP and other diphosphonucleosides, and allosterically inhibited by phosphoenolpyruvate.</text>
</comment>
<comment type="pathway">
    <text evidence="1">Carbohydrate degradation; glycolysis; D-glyceraldehyde 3-phosphate and glycerone phosphate from D-glucose: step 3/4.</text>
</comment>
<comment type="subunit">
    <text evidence="1">Homotetramer.</text>
</comment>
<comment type="subcellular location">
    <subcellularLocation>
        <location evidence="1">Cytoplasm</location>
    </subcellularLocation>
</comment>
<comment type="similarity">
    <text evidence="1">Belongs to the phosphofructokinase type A (PFKA) family. ATP-dependent PFK group I subfamily. Prokaryotic clade 'B1' sub-subfamily.</text>
</comment>
<sequence length="324" mass="36049">MKKIGLLTSGGDCPGLNACIRAVVRTANYYNIEVVAFKRGFKGLIENDFTTLDYKSVAGILQKGGTILLTAREPRFKDYNFRKIAYENIQKHNIEALFVIGGNGSFQGAYLLQKDFGLNIIGIPKTIDNDIYGTDYAIGFDTAVNNAMEAIDKIKDTTMSHERIFIVEVMGRDNGFIALEVGIAVGAELTLIPEYPFPLHVIEETILKAKEMGKNFAIIVLAEGVASAKELSEILNERLKDKDVGEIRYQVLGYIQRGGSPSAYDRVMASKFGVFAVEKFVQGEKNFMVAYENGKLLTKPLEISFNKVRIPNLEEYQINNILSM</sequence>
<dbReference type="EC" id="2.7.1.11" evidence="1"/>
<dbReference type="EMBL" id="CP001080">
    <property type="protein sequence ID" value="ACD66040.1"/>
    <property type="molecule type" value="Genomic_DNA"/>
</dbReference>
<dbReference type="RefSeq" id="WP_012459122.1">
    <property type="nucleotide sequence ID" value="NC_010730.1"/>
</dbReference>
<dbReference type="SMR" id="B2V7W7"/>
<dbReference type="STRING" id="436114.SYO3AOP1_0397"/>
<dbReference type="KEGG" id="sul:SYO3AOP1_0397"/>
<dbReference type="eggNOG" id="COG0205">
    <property type="taxonomic scope" value="Bacteria"/>
</dbReference>
<dbReference type="HOGENOM" id="CLU_020655_0_1_0"/>
<dbReference type="UniPathway" id="UPA00109">
    <property type="reaction ID" value="UER00182"/>
</dbReference>
<dbReference type="GO" id="GO:0005945">
    <property type="term" value="C:6-phosphofructokinase complex"/>
    <property type="evidence" value="ECO:0007669"/>
    <property type="project" value="TreeGrafter"/>
</dbReference>
<dbReference type="GO" id="GO:0003872">
    <property type="term" value="F:6-phosphofructokinase activity"/>
    <property type="evidence" value="ECO:0007669"/>
    <property type="project" value="UniProtKB-UniRule"/>
</dbReference>
<dbReference type="GO" id="GO:0016208">
    <property type="term" value="F:AMP binding"/>
    <property type="evidence" value="ECO:0007669"/>
    <property type="project" value="TreeGrafter"/>
</dbReference>
<dbReference type="GO" id="GO:0005524">
    <property type="term" value="F:ATP binding"/>
    <property type="evidence" value="ECO:0007669"/>
    <property type="project" value="UniProtKB-KW"/>
</dbReference>
<dbReference type="GO" id="GO:0070095">
    <property type="term" value="F:fructose-6-phosphate binding"/>
    <property type="evidence" value="ECO:0007669"/>
    <property type="project" value="TreeGrafter"/>
</dbReference>
<dbReference type="GO" id="GO:0042802">
    <property type="term" value="F:identical protein binding"/>
    <property type="evidence" value="ECO:0007669"/>
    <property type="project" value="TreeGrafter"/>
</dbReference>
<dbReference type="GO" id="GO:0046872">
    <property type="term" value="F:metal ion binding"/>
    <property type="evidence" value="ECO:0007669"/>
    <property type="project" value="UniProtKB-KW"/>
</dbReference>
<dbReference type="GO" id="GO:0048029">
    <property type="term" value="F:monosaccharide binding"/>
    <property type="evidence" value="ECO:0007669"/>
    <property type="project" value="TreeGrafter"/>
</dbReference>
<dbReference type="GO" id="GO:0061621">
    <property type="term" value="P:canonical glycolysis"/>
    <property type="evidence" value="ECO:0007669"/>
    <property type="project" value="TreeGrafter"/>
</dbReference>
<dbReference type="GO" id="GO:0030388">
    <property type="term" value="P:fructose 1,6-bisphosphate metabolic process"/>
    <property type="evidence" value="ECO:0007669"/>
    <property type="project" value="TreeGrafter"/>
</dbReference>
<dbReference type="GO" id="GO:0006002">
    <property type="term" value="P:fructose 6-phosphate metabolic process"/>
    <property type="evidence" value="ECO:0007669"/>
    <property type="project" value="InterPro"/>
</dbReference>
<dbReference type="FunFam" id="3.40.50.460:FF:000002">
    <property type="entry name" value="ATP-dependent 6-phosphofructokinase"/>
    <property type="match status" value="1"/>
</dbReference>
<dbReference type="Gene3D" id="3.40.50.450">
    <property type="match status" value="1"/>
</dbReference>
<dbReference type="Gene3D" id="3.40.50.460">
    <property type="entry name" value="Phosphofructokinase domain"/>
    <property type="match status" value="1"/>
</dbReference>
<dbReference type="HAMAP" id="MF_00339">
    <property type="entry name" value="Phosphofructokinase_I_B1"/>
    <property type="match status" value="1"/>
</dbReference>
<dbReference type="InterPro" id="IPR022953">
    <property type="entry name" value="ATP_PFK"/>
</dbReference>
<dbReference type="InterPro" id="IPR012003">
    <property type="entry name" value="ATP_PFK_prok-type"/>
</dbReference>
<dbReference type="InterPro" id="IPR012828">
    <property type="entry name" value="PFKA_ATP_prok"/>
</dbReference>
<dbReference type="InterPro" id="IPR000023">
    <property type="entry name" value="Phosphofructokinase_dom"/>
</dbReference>
<dbReference type="InterPro" id="IPR035966">
    <property type="entry name" value="PKF_sf"/>
</dbReference>
<dbReference type="NCBIfam" id="TIGR02482">
    <property type="entry name" value="PFKA_ATP"/>
    <property type="match status" value="1"/>
</dbReference>
<dbReference type="NCBIfam" id="NF002872">
    <property type="entry name" value="PRK03202.1"/>
    <property type="match status" value="1"/>
</dbReference>
<dbReference type="PANTHER" id="PTHR13697:SF4">
    <property type="entry name" value="ATP-DEPENDENT 6-PHOSPHOFRUCTOKINASE"/>
    <property type="match status" value="1"/>
</dbReference>
<dbReference type="PANTHER" id="PTHR13697">
    <property type="entry name" value="PHOSPHOFRUCTOKINASE"/>
    <property type="match status" value="1"/>
</dbReference>
<dbReference type="Pfam" id="PF00365">
    <property type="entry name" value="PFK"/>
    <property type="match status" value="1"/>
</dbReference>
<dbReference type="PIRSF" id="PIRSF000532">
    <property type="entry name" value="ATP_PFK_prok"/>
    <property type="match status" value="1"/>
</dbReference>
<dbReference type="PRINTS" id="PR00476">
    <property type="entry name" value="PHFRCTKINASE"/>
</dbReference>
<dbReference type="SUPFAM" id="SSF53784">
    <property type="entry name" value="Phosphofructokinase"/>
    <property type="match status" value="1"/>
</dbReference>
<accession>B2V7W7</accession>